<sequence>MIKNYLGRRWLNNPAIQAYVKQNAAVAHSTVFQGNLYEYTVMRELSEKLRMTKLRKTGGAHDGGVDIKGSWPVDDIYWKISSLMPNLEMASNIKRTNSQNGFVLKPLKYRIIDHTFEPLKVLVQCKAFTKSKLSPREFRELVGTFTSLVSHSQRNKTVCIMCSPHMLTKDTLNLINNITLPLIYLRVEMLKEKTDGHFDLINSGKLINYYENSYASTLMQDCKISEWLKLKLYKNSDFNSEK</sequence>
<dbReference type="EMBL" id="AAFW02000032">
    <property type="protein sequence ID" value="EDN63631.1"/>
    <property type="molecule type" value="Genomic_DNA"/>
</dbReference>
<dbReference type="HOGENOM" id="CLU_085105_1_0_1"/>
<dbReference type="Proteomes" id="UP000007060">
    <property type="component" value="Unassembled WGS sequence"/>
</dbReference>
<dbReference type="GO" id="GO:0005739">
    <property type="term" value="C:mitochondrion"/>
    <property type="evidence" value="ECO:0007669"/>
    <property type="project" value="UniProtKB-SubCell"/>
</dbReference>
<dbReference type="InterPro" id="IPR018828">
    <property type="entry name" value="RRG7"/>
</dbReference>
<dbReference type="PANTHER" id="PTHR28133">
    <property type="entry name" value="REQUIRED FOR RESPIRATORY GROWTH PROTEIN 7, MITOCHONDRIAL"/>
    <property type="match status" value="1"/>
</dbReference>
<dbReference type="PANTHER" id="PTHR28133:SF1">
    <property type="entry name" value="REQUIRED FOR RESPIRATORY GROWTH PROTEIN 7, MITOCHONDRIAL"/>
    <property type="match status" value="1"/>
</dbReference>
<dbReference type="Pfam" id="PF10356">
    <property type="entry name" value="RRG7"/>
    <property type="match status" value="1"/>
</dbReference>
<proteinExistence type="inferred from homology"/>
<protein>
    <recommendedName>
        <fullName>Required for respiratory growth protein 7, mitochondrial</fullName>
    </recommendedName>
</protein>
<accession>A6ZPE1</accession>
<reference key="1">
    <citation type="journal article" date="2007" name="Proc. Natl. Acad. Sci. U.S.A.">
        <title>Genome sequencing and comparative analysis of Saccharomyces cerevisiae strain YJM789.</title>
        <authorList>
            <person name="Wei W."/>
            <person name="McCusker J.H."/>
            <person name="Hyman R.W."/>
            <person name="Jones T."/>
            <person name="Ning Y."/>
            <person name="Cao Z."/>
            <person name="Gu Z."/>
            <person name="Bruno D."/>
            <person name="Miranda M."/>
            <person name="Nguyen M."/>
            <person name="Wilhelmy J."/>
            <person name="Komp C."/>
            <person name="Tamse R."/>
            <person name="Wang X."/>
            <person name="Jia P."/>
            <person name="Luedi P."/>
            <person name="Oefner P.J."/>
            <person name="David L."/>
            <person name="Dietrich F.S."/>
            <person name="Li Y."/>
            <person name="Davis R.W."/>
            <person name="Steinmetz L.M."/>
        </authorList>
    </citation>
    <scope>NUCLEOTIDE SEQUENCE [LARGE SCALE GENOMIC DNA]</scope>
    <source>
        <strain>YJM789</strain>
    </source>
</reference>
<feature type="chain" id="PRO_0000405461" description="Required for respiratory growth protein 7, mitochondrial">
    <location>
        <begin position="1"/>
        <end position="242"/>
    </location>
</feature>
<gene>
    <name type="primary">RRG7</name>
    <name type="ORF">SCY_5356</name>
</gene>
<keyword id="KW-0496">Mitochondrion</keyword>
<evidence type="ECO:0000250" key="1"/>
<evidence type="ECO:0000305" key="2"/>
<name>RRG7_YEAS7</name>
<comment type="subcellular location">
    <subcellularLocation>
        <location evidence="1">Mitochondrion</location>
    </subcellularLocation>
</comment>
<comment type="similarity">
    <text evidence="2">Belongs to the RRG7 family.</text>
</comment>
<organism>
    <name type="scientific">Saccharomyces cerevisiae (strain YJM789)</name>
    <name type="common">Baker's yeast</name>
    <dbReference type="NCBI Taxonomy" id="307796"/>
    <lineage>
        <taxon>Eukaryota</taxon>
        <taxon>Fungi</taxon>
        <taxon>Dikarya</taxon>
        <taxon>Ascomycota</taxon>
        <taxon>Saccharomycotina</taxon>
        <taxon>Saccharomycetes</taxon>
        <taxon>Saccharomycetales</taxon>
        <taxon>Saccharomycetaceae</taxon>
        <taxon>Saccharomyces</taxon>
    </lineage>
</organism>